<reference key="1">
    <citation type="journal article" date="2013" name="Plant Physiol.">
        <title>A Nostoc punctiforme Sugar Transporter Necessary to Establish a Cyanobacterium-Plant Symbiosis.</title>
        <authorList>
            <person name="Ekman M."/>
            <person name="Picossi S."/>
            <person name="Campbell E.L."/>
            <person name="Meeks J.C."/>
            <person name="Flores E."/>
        </authorList>
    </citation>
    <scope>NUCLEOTIDE SEQUENCE [LARGE SCALE GENOMIC DNA]</scope>
    <source>
        <strain>ATCC 29133 / PCC 73102</strain>
    </source>
</reference>
<protein>
    <recommendedName>
        <fullName evidence="1">Heat-inducible transcription repressor HrcA</fullName>
    </recommendedName>
</protein>
<proteinExistence type="inferred from homology"/>
<name>HRCA_NOSP7</name>
<accession>B2J938</accession>
<sequence>MEVQLTNRQQHILWATVRHYIATAEPVGSKALVEEYDLGVSSATIRNVMGVLEKSGLLYQPHASAGRVPSDSGYRIYVDQLITPSLRSRSVSQTDATRTETLGREIEVALQKHLQWEDRSLETLLQGAAQILATLSGCISLITMPQTTTALLRHLQLVQIEAGRIMLIVVTDGYETHSKLMDLSPIPEETQRDSEVIDRELQIVSNFLNTHLRGRSLLELANLNWSELDQEFQRYGEFLKNSVAELTRRTLAPTATQIMVRGVSEVLRQPEFSQLQQVQTIIHLLEEEQDQLWRLIFEEPEPEDIGKSRVTVRIGAENPLEPIRTCTLISSNYRRGSIPVGSVGVLGPTRLDYESAIAVVASAADYLSEAFSYFNP</sequence>
<gene>
    <name evidence="1" type="primary">hrcA</name>
    <name type="ordered locus">Npun_F5754</name>
</gene>
<keyword id="KW-1185">Reference proteome</keyword>
<keyword id="KW-0678">Repressor</keyword>
<keyword id="KW-0346">Stress response</keyword>
<keyword id="KW-0804">Transcription</keyword>
<keyword id="KW-0805">Transcription regulation</keyword>
<comment type="function">
    <text evidence="1">Negative regulator of class I heat shock genes (grpE-dnaK-dnaJ and groELS operons). Prevents heat-shock induction of these operons.</text>
</comment>
<comment type="similarity">
    <text evidence="1">Belongs to the HrcA family.</text>
</comment>
<organism>
    <name type="scientific">Nostoc punctiforme (strain ATCC 29133 / PCC 73102)</name>
    <dbReference type="NCBI Taxonomy" id="63737"/>
    <lineage>
        <taxon>Bacteria</taxon>
        <taxon>Bacillati</taxon>
        <taxon>Cyanobacteriota</taxon>
        <taxon>Cyanophyceae</taxon>
        <taxon>Nostocales</taxon>
        <taxon>Nostocaceae</taxon>
        <taxon>Nostoc</taxon>
    </lineage>
</organism>
<feature type="chain" id="PRO_1000092823" description="Heat-inducible transcription repressor HrcA">
    <location>
        <begin position="1"/>
        <end position="376"/>
    </location>
</feature>
<evidence type="ECO:0000255" key="1">
    <source>
        <dbReference type="HAMAP-Rule" id="MF_00081"/>
    </source>
</evidence>
<dbReference type="EMBL" id="CP001037">
    <property type="protein sequence ID" value="ACC84054.1"/>
    <property type="molecule type" value="Genomic_DNA"/>
</dbReference>
<dbReference type="RefSeq" id="WP_012411997.1">
    <property type="nucleotide sequence ID" value="NC_010628.1"/>
</dbReference>
<dbReference type="SMR" id="B2J938"/>
<dbReference type="STRING" id="63737.Npun_F5754"/>
<dbReference type="EnsemblBacteria" id="ACC84054">
    <property type="protein sequence ID" value="ACC84054"/>
    <property type="gene ID" value="Npun_F5754"/>
</dbReference>
<dbReference type="KEGG" id="npu:Npun_F5754"/>
<dbReference type="eggNOG" id="COG1420">
    <property type="taxonomic scope" value="Bacteria"/>
</dbReference>
<dbReference type="HOGENOM" id="CLU_050019_1_0_3"/>
<dbReference type="OrthoDB" id="9783139at2"/>
<dbReference type="PhylomeDB" id="B2J938"/>
<dbReference type="Proteomes" id="UP000001191">
    <property type="component" value="Chromosome"/>
</dbReference>
<dbReference type="GO" id="GO:0003677">
    <property type="term" value="F:DNA binding"/>
    <property type="evidence" value="ECO:0007669"/>
    <property type="project" value="InterPro"/>
</dbReference>
<dbReference type="GO" id="GO:0045892">
    <property type="term" value="P:negative regulation of DNA-templated transcription"/>
    <property type="evidence" value="ECO:0007669"/>
    <property type="project" value="UniProtKB-UniRule"/>
</dbReference>
<dbReference type="Gene3D" id="3.30.450.40">
    <property type="match status" value="1"/>
</dbReference>
<dbReference type="Gene3D" id="3.30.390.60">
    <property type="entry name" value="Heat-inducible transcription repressor hrca homolog, domain 3"/>
    <property type="match status" value="1"/>
</dbReference>
<dbReference type="Gene3D" id="1.10.10.10">
    <property type="entry name" value="Winged helix-like DNA-binding domain superfamily/Winged helix DNA-binding domain"/>
    <property type="match status" value="1"/>
</dbReference>
<dbReference type="HAMAP" id="MF_00081">
    <property type="entry name" value="HrcA"/>
    <property type="match status" value="1"/>
</dbReference>
<dbReference type="InterPro" id="IPR029016">
    <property type="entry name" value="GAF-like_dom_sf"/>
</dbReference>
<dbReference type="InterPro" id="IPR002571">
    <property type="entry name" value="HrcA"/>
</dbReference>
<dbReference type="InterPro" id="IPR021153">
    <property type="entry name" value="HrcA_C"/>
</dbReference>
<dbReference type="InterPro" id="IPR036388">
    <property type="entry name" value="WH-like_DNA-bd_sf"/>
</dbReference>
<dbReference type="InterPro" id="IPR036390">
    <property type="entry name" value="WH_DNA-bd_sf"/>
</dbReference>
<dbReference type="InterPro" id="IPR023120">
    <property type="entry name" value="WHTH_transcript_rep_HrcA_IDD"/>
</dbReference>
<dbReference type="NCBIfam" id="TIGR00331">
    <property type="entry name" value="hrcA"/>
    <property type="match status" value="1"/>
</dbReference>
<dbReference type="PANTHER" id="PTHR34824">
    <property type="entry name" value="HEAT-INDUCIBLE TRANSCRIPTION REPRESSOR HRCA"/>
    <property type="match status" value="1"/>
</dbReference>
<dbReference type="PANTHER" id="PTHR34824:SF1">
    <property type="entry name" value="HEAT-INDUCIBLE TRANSCRIPTION REPRESSOR HRCA"/>
    <property type="match status" value="1"/>
</dbReference>
<dbReference type="Pfam" id="PF01628">
    <property type="entry name" value="HrcA"/>
    <property type="match status" value="1"/>
</dbReference>
<dbReference type="PIRSF" id="PIRSF005485">
    <property type="entry name" value="HrcA"/>
    <property type="match status" value="1"/>
</dbReference>
<dbReference type="SUPFAM" id="SSF55781">
    <property type="entry name" value="GAF domain-like"/>
    <property type="match status" value="1"/>
</dbReference>
<dbReference type="SUPFAM" id="SSF46785">
    <property type="entry name" value="Winged helix' DNA-binding domain"/>
    <property type="match status" value="1"/>
</dbReference>